<keyword id="KW-0349">Heme</keyword>
<keyword id="KW-0408">Iron</keyword>
<keyword id="KW-0472">Membrane</keyword>
<keyword id="KW-0479">Metal-binding</keyword>
<keyword id="KW-0503">Monooxygenase</keyword>
<keyword id="KW-0560">Oxidoreductase</keyword>
<keyword id="KW-0611">Plant defense</keyword>
<keyword id="KW-1185">Reference proteome</keyword>
<keyword id="KW-0812">Transmembrane</keyword>
<keyword id="KW-1133">Transmembrane helix</keyword>
<comment type="function">
    <text evidence="3 4">Cleaves the arabidiol side chain at C15 to form 14-apo-arabidiol and a side-chain fragment (PubMed:23570231, PubMed:25724638). Involved in the biosynthesis of the volatile homoterpene (E)-4,8-dimethyl-1,3,7-nonatriene (DMNT) in roots. Involved in the production of DMNT by degrading the triterpene arabidiol. May be involved in the defense again the fungal root pathogen Pythium irregulare by producing DMNT (PubMed:25724638).</text>
</comment>
<comment type="cofactor">
    <cofactor evidence="1">
        <name>heme</name>
        <dbReference type="ChEBI" id="CHEBI:30413"/>
    </cofactor>
</comment>
<comment type="subcellular location">
    <subcellularLocation>
        <location evidence="2">Membrane</location>
        <topology evidence="2">Single-pass membrane protein</topology>
    </subcellularLocation>
</comment>
<comment type="tissue specificity">
    <text evidence="4">Expressed in root stele, root cortex, root epidermis, root pericycle of the root hair zone, and quiescent center at the root meristematic zone.</text>
</comment>
<comment type="induction">
    <text evidence="4">Induced by jasmonate.</text>
</comment>
<comment type="similarity">
    <text evidence="6">Belongs to the cytochrome P450 family.</text>
</comment>
<comment type="sequence caution" evidence="6">
    <conflict type="erroneous gene model prediction">
        <sequence resource="EMBL-CDS" id="CAB10312"/>
    </conflict>
</comment>
<comment type="sequence caution" evidence="6">
    <conflict type="erroneous gene model prediction">
        <sequence resource="EMBL-CDS" id="CAB78575"/>
    </conflict>
</comment>
<organism>
    <name type="scientific">Arabidopsis thaliana</name>
    <name type="common">Mouse-ear cress</name>
    <dbReference type="NCBI Taxonomy" id="3702"/>
    <lineage>
        <taxon>Eukaryota</taxon>
        <taxon>Viridiplantae</taxon>
        <taxon>Streptophyta</taxon>
        <taxon>Embryophyta</taxon>
        <taxon>Tracheophyta</taxon>
        <taxon>Spermatophyta</taxon>
        <taxon>Magnoliopsida</taxon>
        <taxon>eudicotyledons</taxon>
        <taxon>Gunneridae</taxon>
        <taxon>Pentapetalae</taxon>
        <taxon>rosids</taxon>
        <taxon>malvids</taxon>
        <taxon>Brassicales</taxon>
        <taxon>Brassicaceae</taxon>
        <taxon>Camelineae</taxon>
        <taxon>Arabidopsis</taxon>
    </lineage>
</organism>
<dbReference type="EC" id="1.14.-.-" evidence="6"/>
<dbReference type="EMBL" id="Z97338">
    <property type="protein sequence ID" value="CAB10312.1"/>
    <property type="status" value="ALT_SEQ"/>
    <property type="molecule type" value="Genomic_DNA"/>
</dbReference>
<dbReference type="EMBL" id="AL161541">
    <property type="protein sequence ID" value="CAB78575.1"/>
    <property type="status" value="ALT_SEQ"/>
    <property type="molecule type" value="Genomic_DNA"/>
</dbReference>
<dbReference type="EMBL" id="CP002687">
    <property type="protein sequence ID" value="AEE83585.1"/>
    <property type="molecule type" value="Genomic_DNA"/>
</dbReference>
<dbReference type="EMBL" id="AK228903">
    <property type="protein sequence ID" value="BAF00792.1"/>
    <property type="molecule type" value="mRNA"/>
</dbReference>
<dbReference type="PIR" id="F71417">
    <property type="entry name" value="F71417"/>
</dbReference>
<dbReference type="RefSeq" id="NP_193268.3">
    <property type="nucleotide sequence ID" value="NM_117621.5"/>
</dbReference>
<dbReference type="SMR" id="Q0WQ07"/>
<dbReference type="FunCoup" id="Q0WQ07">
    <property type="interactions" value="208"/>
</dbReference>
<dbReference type="STRING" id="3702.Q0WQ07"/>
<dbReference type="iPTMnet" id="Q0WQ07"/>
<dbReference type="PaxDb" id="3702-AT4G15330.1"/>
<dbReference type="ProteomicsDB" id="239203"/>
<dbReference type="EnsemblPlants" id="AT4G15330.1">
    <property type="protein sequence ID" value="AT4G15330.1"/>
    <property type="gene ID" value="AT4G15330"/>
</dbReference>
<dbReference type="GeneID" id="827199"/>
<dbReference type="Gramene" id="AT4G15330.1">
    <property type="protein sequence ID" value="AT4G15330.1"/>
    <property type="gene ID" value="AT4G15330"/>
</dbReference>
<dbReference type="KEGG" id="ath:AT4G15330"/>
<dbReference type="Araport" id="AT4G15330"/>
<dbReference type="TAIR" id="AT4G15330">
    <property type="gene designation" value="CYP705A1"/>
</dbReference>
<dbReference type="eggNOG" id="KOG0156">
    <property type="taxonomic scope" value="Eukaryota"/>
</dbReference>
<dbReference type="HOGENOM" id="CLU_001570_4_0_1"/>
<dbReference type="InParanoid" id="Q0WQ07"/>
<dbReference type="OMA" id="VEDEPAC"/>
<dbReference type="PhylomeDB" id="Q0WQ07"/>
<dbReference type="BioCyc" id="ARA:AT4G15330-MONOMER"/>
<dbReference type="BioCyc" id="MetaCyc:AT4G15330-MONOMER"/>
<dbReference type="PRO" id="PR:Q0WQ07"/>
<dbReference type="Proteomes" id="UP000006548">
    <property type="component" value="Chromosome 4"/>
</dbReference>
<dbReference type="ExpressionAtlas" id="Q0WQ07">
    <property type="expression patterns" value="baseline and differential"/>
</dbReference>
<dbReference type="GO" id="GO:0016020">
    <property type="term" value="C:membrane"/>
    <property type="evidence" value="ECO:0007669"/>
    <property type="project" value="UniProtKB-SubCell"/>
</dbReference>
<dbReference type="GO" id="GO:0020037">
    <property type="term" value="F:heme binding"/>
    <property type="evidence" value="ECO:0007669"/>
    <property type="project" value="InterPro"/>
</dbReference>
<dbReference type="GO" id="GO:0005506">
    <property type="term" value="F:iron ion binding"/>
    <property type="evidence" value="ECO:0007669"/>
    <property type="project" value="InterPro"/>
</dbReference>
<dbReference type="GO" id="GO:0004497">
    <property type="term" value="F:monooxygenase activity"/>
    <property type="evidence" value="ECO:0007669"/>
    <property type="project" value="UniProtKB-KW"/>
</dbReference>
<dbReference type="GO" id="GO:0016705">
    <property type="term" value="F:oxidoreductase activity, acting on paired donors, with incorporation or reduction of molecular oxygen"/>
    <property type="evidence" value="ECO:0000314"/>
    <property type="project" value="UniProtKB"/>
</dbReference>
<dbReference type="GO" id="GO:0050832">
    <property type="term" value="P:defense response to fungus"/>
    <property type="evidence" value="ECO:0000314"/>
    <property type="project" value="UniProtKB"/>
</dbReference>
<dbReference type="GO" id="GO:0046246">
    <property type="term" value="P:terpene biosynthetic process"/>
    <property type="evidence" value="ECO:0000314"/>
    <property type="project" value="UniProtKB"/>
</dbReference>
<dbReference type="CDD" id="cd20655">
    <property type="entry name" value="CYP93"/>
    <property type="match status" value="1"/>
</dbReference>
<dbReference type="FunFam" id="1.10.630.10:FF:000019">
    <property type="entry name" value="Cytochrome P450 family protein"/>
    <property type="match status" value="1"/>
</dbReference>
<dbReference type="Gene3D" id="1.10.630.10">
    <property type="entry name" value="Cytochrome P450"/>
    <property type="match status" value="1"/>
</dbReference>
<dbReference type="InterPro" id="IPR001128">
    <property type="entry name" value="Cyt_P450"/>
</dbReference>
<dbReference type="InterPro" id="IPR017972">
    <property type="entry name" value="Cyt_P450_CS"/>
</dbReference>
<dbReference type="InterPro" id="IPR002401">
    <property type="entry name" value="Cyt_P450_E_grp-I"/>
</dbReference>
<dbReference type="InterPro" id="IPR036396">
    <property type="entry name" value="Cyt_P450_sf"/>
</dbReference>
<dbReference type="InterPro" id="IPR051103">
    <property type="entry name" value="Plant_metabolite_P450s"/>
</dbReference>
<dbReference type="PANTHER" id="PTHR24298:SF630">
    <property type="entry name" value="CYTOCHROME P450 705A1-RELATED"/>
    <property type="match status" value="1"/>
</dbReference>
<dbReference type="PANTHER" id="PTHR24298">
    <property type="entry name" value="FLAVONOID 3'-MONOOXYGENASE-RELATED"/>
    <property type="match status" value="1"/>
</dbReference>
<dbReference type="Pfam" id="PF00067">
    <property type="entry name" value="p450"/>
    <property type="match status" value="1"/>
</dbReference>
<dbReference type="PRINTS" id="PR00463">
    <property type="entry name" value="EP450I"/>
</dbReference>
<dbReference type="PRINTS" id="PR00385">
    <property type="entry name" value="P450"/>
</dbReference>
<dbReference type="SUPFAM" id="SSF48264">
    <property type="entry name" value="Cytochrome P450"/>
    <property type="match status" value="1"/>
</dbReference>
<dbReference type="PROSITE" id="PS00086">
    <property type="entry name" value="CYTOCHROME_P450"/>
    <property type="match status" value="1"/>
</dbReference>
<protein>
    <recommendedName>
        <fullName evidence="5">Cytochrome P450 705A1</fullName>
        <ecNumber evidence="6">1.14.-.-</ecNumber>
    </recommendedName>
</protein>
<accession>Q0WQ07</accession>
<accession>O23387</accession>
<name>C7051_ARATH</name>
<reference key="1">
    <citation type="journal article" date="1998" name="Nature">
        <title>Analysis of 1.9 Mb of contiguous sequence from chromosome 4 of Arabidopsis thaliana.</title>
        <authorList>
            <person name="Bevan M."/>
            <person name="Bancroft I."/>
            <person name="Bent E."/>
            <person name="Love K."/>
            <person name="Goodman H.M."/>
            <person name="Dean C."/>
            <person name="Bergkamp R."/>
            <person name="Dirkse W."/>
            <person name="van Staveren M."/>
            <person name="Stiekema W."/>
            <person name="Drost L."/>
            <person name="Ridley P."/>
            <person name="Hudson S.-A."/>
            <person name="Patel K."/>
            <person name="Murphy G."/>
            <person name="Piffanelli P."/>
            <person name="Wedler H."/>
            <person name="Wedler E."/>
            <person name="Wambutt R."/>
            <person name="Weitzenegger T."/>
            <person name="Pohl T."/>
            <person name="Terryn N."/>
            <person name="Gielen J."/>
            <person name="Villarroel R."/>
            <person name="De Clercq R."/>
            <person name="van Montagu M."/>
            <person name="Lecharny A."/>
            <person name="Aubourg S."/>
            <person name="Gy I."/>
            <person name="Kreis M."/>
            <person name="Lao N."/>
            <person name="Kavanagh T."/>
            <person name="Hempel S."/>
            <person name="Kotter P."/>
            <person name="Entian K.-D."/>
            <person name="Rieger M."/>
            <person name="Schaefer M."/>
            <person name="Funk B."/>
            <person name="Mueller-Auer S."/>
            <person name="Silvey M."/>
            <person name="James R."/>
            <person name="Monfort A."/>
            <person name="Pons A."/>
            <person name="Puigdomenech P."/>
            <person name="Douka A."/>
            <person name="Voukelatou E."/>
            <person name="Milioni D."/>
            <person name="Hatzopoulos P."/>
            <person name="Piravandi E."/>
            <person name="Obermaier B."/>
            <person name="Hilbert H."/>
            <person name="Duesterhoeft A."/>
            <person name="Moores T."/>
            <person name="Jones J.D.G."/>
            <person name="Eneva T."/>
            <person name="Palme K."/>
            <person name="Benes V."/>
            <person name="Rechmann S."/>
            <person name="Ansorge W."/>
            <person name="Cooke R."/>
            <person name="Berger C."/>
            <person name="Delseny M."/>
            <person name="Voet M."/>
            <person name="Volckaert G."/>
            <person name="Mewes H.-W."/>
            <person name="Klosterman S."/>
            <person name="Schueller C."/>
            <person name="Chalwatzis N."/>
        </authorList>
    </citation>
    <scope>NUCLEOTIDE SEQUENCE [LARGE SCALE GENOMIC DNA]</scope>
    <source>
        <strain>cv. Columbia</strain>
    </source>
</reference>
<reference key="2">
    <citation type="journal article" date="1999" name="Nature">
        <title>Sequence and analysis of chromosome 4 of the plant Arabidopsis thaliana.</title>
        <authorList>
            <person name="Mayer K.F.X."/>
            <person name="Schueller C."/>
            <person name="Wambutt R."/>
            <person name="Murphy G."/>
            <person name="Volckaert G."/>
            <person name="Pohl T."/>
            <person name="Duesterhoeft A."/>
            <person name="Stiekema W."/>
            <person name="Entian K.-D."/>
            <person name="Terryn N."/>
            <person name="Harris B."/>
            <person name="Ansorge W."/>
            <person name="Brandt P."/>
            <person name="Grivell L.A."/>
            <person name="Rieger M."/>
            <person name="Weichselgartner M."/>
            <person name="de Simone V."/>
            <person name="Obermaier B."/>
            <person name="Mache R."/>
            <person name="Mueller M."/>
            <person name="Kreis M."/>
            <person name="Delseny M."/>
            <person name="Puigdomenech P."/>
            <person name="Watson M."/>
            <person name="Schmidtheini T."/>
            <person name="Reichert B."/>
            <person name="Portetelle D."/>
            <person name="Perez-Alonso M."/>
            <person name="Boutry M."/>
            <person name="Bancroft I."/>
            <person name="Vos P."/>
            <person name="Hoheisel J."/>
            <person name="Zimmermann W."/>
            <person name="Wedler H."/>
            <person name="Ridley P."/>
            <person name="Langham S.-A."/>
            <person name="McCullagh B."/>
            <person name="Bilham L."/>
            <person name="Robben J."/>
            <person name="van der Schueren J."/>
            <person name="Grymonprez B."/>
            <person name="Chuang Y.-J."/>
            <person name="Vandenbussche F."/>
            <person name="Braeken M."/>
            <person name="Weltjens I."/>
            <person name="Voet M."/>
            <person name="Bastiaens I."/>
            <person name="Aert R."/>
            <person name="Defoor E."/>
            <person name="Weitzenegger T."/>
            <person name="Bothe G."/>
            <person name="Ramsperger U."/>
            <person name="Hilbert H."/>
            <person name="Braun M."/>
            <person name="Holzer E."/>
            <person name="Brandt A."/>
            <person name="Peters S."/>
            <person name="van Staveren M."/>
            <person name="Dirkse W."/>
            <person name="Mooijman P."/>
            <person name="Klein Lankhorst R."/>
            <person name="Rose M."/>
            <person name="Hauf J."/>
            <person name="Koetter P."/>
            <person name="Berneiser S."/>
            <person name="Hempel S."/>
            <person name="Feldpausch M."/>
            <person name="Lamberth S."/>
            <person name="Van den Daele H."/>
            <person name="De Keyser A."/>
            <person name="Buysshaert C."/>
            <person name="Gielen J."/>
            <person name="Villarroel R."/>
            <person name="De Clercq R."/>
            <person name="van Montagu M."/>
            <person name="Rogers J."/>
            <person name="Cronin A."/>
            <person name="Quail M.A."/>
            <person name="Bray-Allen S."/>
            <person name="Clark L."/>
            <person name="Doggett J."/>
            <person name="Hall S."/>
            <person name="Kay M."/>
            <person name="Lennard N."/>
            <person name="McLay K."/>
            <person name="Mayes R."/>
            <person name="Pettett A."/>
            <person name="Rajandream M.A."/>
            <person name="Lyne M."/>
            <person name="Benes V."/>
            <person name="Rechmann S."/>
            <person name="Borkova D."/>
            <person name="Bloecker H."/>
            <person name="Scharfe M."/>
            <person name="Grimm M."/>
            <person name="Loehnert T.-H."/>
            <person name="Dose S."/>
            <person name="de Haan M."/>
            <person name="Maarse A.C."/>
            <person name="Schaefer M."/>
            <person name="Mueller-Auer S."/>
            <person name="Gabel C."/>
            <person name="Fuchs M."/>
            <person name="Fartmann B."/>
            <person name="Granderath K."/>
            <person name="Dauner D."/>
            <person name="Herzl A."/>
            <person name="Neumann S."/>
            <person name="Argiriou A."/>
            <person name="Vitale D."/>
            <person name="Liguori R."/>
            <person name="Piravandi E."/>
            <person name="Massenet O."/>
            <person name="Quigley F."/>
            <person name="Clabauld G."/>
            <person name="Muendlein A."/>
            <person name="Felber R."/>
            <person name="Schnabl S."/>
            <person name="Hiller R."/>
            <person name="Schmidt W."/>
            <person name="Lecharny A."/>
            <person name="Aubourg S."/>
            <person name="Chefdor F."/>
            <person name="Cooke R."/>
            <person name="Berger C."/>
            <person name="Monfort A."/>
            <person name="Casacuberta E."/>
            <person name="Gibbons T."/>
            <person name="Weber N."/>
            <person name="Vandenbol M."/>
            <person name="Bargues M."/>
            <person name="Terol J."/>
            <person name="Torres A."/>
            <person name="Perez-Perez A."/>
            <person name="Purnelle B."/>
            <person name="Bent E."/>
            <person name="Johnson S."/>
            <person name="Tacon D."/>
            <person name="Jesse T."/>
            <person name="Heijnen L."/>
            <person name="Schwarz S."/>
            <person name="Scholler P."/>
            <person name="Heber S."/>
            <person name="Francs P."/>
            <person name="Bielke C."/>
            <person name="Frishman D."/>
            <person name="Haase D."/>
            <person name="Lemcke K."/>
            <person name="Mewes H.-W."/>
            <person name="Stocker S."/>
            <person name="Zaccaria P."/>
            <person name="Bevan M."/>
            <person name="Wilson R.K."/>
            <person name="de la Bastide M."/>
            <person name="Habermann K."/>
            <person name="Parnell L."/>
            <person name="Dedhia N."/>
            <person name="Gnoj L."/>
            <person name="Schutz K."/>
            <person name="Huang E."/>
            <person name="Spiegel L."/>
            <person name="Sekhon M."/>
            <person name="Murray J."/>
            <person name="Sheet P."/>
            <person name="Cordes M."/>
            <person name="Abu-Threideh J."/>
            <person name="Stoneking T."/>
            <person name="Kalicki J."/>
            <person name="Graves T."/>
            <person name="Harmon G."/>
            <person name="Edwards J."/>
            <person name="Latreille P."/>
            <person name="Courtney L."/>
            <person name="Cloud J."/>
            <person name="Abbott A."/>
            <person name="Scott K."/>
            <person name="Johnson D."/>
            <person name="Minx P."/>
            <person name="Bentley D."/>
            <person name="Fulton B."/>
            <person name="Miller N."/>
            <person name="Greco T."/>
            <person name="Kemp K."/>
            <person name="Kramer J."/>
            <person name="Fulton L."/>
            <person name="Mardis E."/>
            <person name="Dante M."/>
            <person name="Pepin K."/>
            <person name="Hillier L.W."/>
            <person name="Nelson J."/>
            <person name="Spieth J."/>
            <person name="Ryan E."/>
            <person name="Andrews S."/>
            <person name="Geisel C."/>
            <person name="Layman D."/>
            <person name="Du H."/>
            <person name="Ali J."/>
            <person name="Berghoff A."/>
            <person name="Jones K."/>
            <person name="Drone K."/>
            <person name="Cotton M."/>
            <person name="Joshu C."/>
            <person name="Antonoiu B."/>
            <person name="Zidanic M."/>
            <person name="Strong C."/>
            <person name="Sun H."/>
            <person name="Lamar B."/>
            <person name="Yordan C."/>
            <person name="Ma P."/>
            <person name="Zhong J."/>
            <person name="Preston R."/>
            <person name="Vil D."/>
            <person name="Shekher M."/>
            <person name="Matero A."/>
            <person name="Shah R."/>
            <person name="Swaby I.K."/>
            <person name="O'Shaughnessy A."/>
            <person name="Rodriguez M."/>
            <person name="Hoffman J."/>
            <person name="Till S."/>
            <person name="Granat S."/>
            <person name="Shohdy N."/>
            <person name="Hasegawa A."/>
            <person name="Hameed A."/>
            <person name="Lodhi M."/>
            <person name="Johnson A."/>
            <person name="Chen E."/>
            <person name="Marra M.A."/>
            <person name="Martienssen R."/>
            <person name="McCombie W.R."/>
        </authorList>
    </citation>
    <scope>NUCLEOTIDE SEQUENCE [LARGE SCALE GENOMIC DNA]</scope>
    <source>
        <strain>cv. Columbia</strain>
    </source>
</reference>
<reference key="3">
    <citation type="journal article" date="2017" name="Plant J.">
        <title>Araport11: a complete reannotation of the Arabidopsis thaliana reference genome.</title>
        <authorList>
            <person name="Cheng C.Y."/>
            <person name="Krishnakumar V."/>
            <person name="Chan A.P."/>
            <person name="Thibaud-Nissen F."/>
            <person name="Schobel S."/>
            <person name="Town C.D."/>
        </authorList>
    </citation>
    <scope>GENOME REANNOTATION</scope>
    <source>
        <strain>cv. Columbia</strain>
    </source>
</reference>
<reference key="4">
    <citation type="submission" date="2006-07" db="EMBL/GenBank/DDBJ databases">
        <title>Large-scale analysis of RIKEN Arabidopsis full-length (RAFL) cDNAs.</title>
        <authorList>
            <person name="Totoki Y."/>
            <person name="Seki M."/>
            <person name="Ishida J."/>
            <person name="Nakajima M."/>
            <person name="Enju A."/>
            <person name="Kamiya A."/>
            <person name="Narusaka M."/>
            <person name="Shin-i T."/>
            <person name="Nakagawa M."/>
            <person name="Sakamoto N."/>
            <person name="Oishi K."/>
            <person name="Kohara Y."/>
            <person name="Kobayashi M."/>
            <person name="Toyoda A."/>
            <person name="Sakaki Y."/>
            <person name="Sakurai T."/>
            <person name="Iida K."/>
            <person name="Akiyama K."/>
            <person name="Satou M."/>
            <person name="Toyoda T."/>
            <person name="Konagaya A."/>
            <person name="Carninci P."/>
            <person name="Kawai J."/>
            <person name="Hayashizaki Y."/>
            <person name="Shinozaki K."/>
        </authorList>
    </citation>
    <scope>NUCLEOTIDE SEQUENCE [LARGE SCALE MRNA]</scope>
    <source>
        <strain>cv. Columbia</strain>
    </source>
</reference>
<reference key="5">
    <citation type="journal article" date="2013" name="J. Am. Chem. Soc.">
        <title>An effective strategy for exploring unknown metabolic pathways by genome mining.</title>
        <authorList>
            <person name="Castillo D.A."/>
            <person name="Kolesnikova M.D."/>
            <person name="Matsuda S.P."/>
        </authorList>
    </citation>
    <scope>FUNCTION</scope>
</reference>
<reference key="6">
    <citation type="journal article" date="2015" name="Plant Cell">
        <title>In planta variation of volatile biosynthesis: an alternative biosynthetic route to the formation of the pathogen-induced volatile homoterpene DMNT via triterpene degradation in Arabidopsis roots.</title>
        <authorList>
            <person name="Sohrabi R."/>
            <person name="Huh J.H."/>
            <person name="Badieyan S."/>
            <person name="Rakotondraibe L.H."/>
            <person name="Kliebenstein D.J."/>
            <person name="Sobrado P."/>
            <person name="Tholl D."/>
        </authorList>
    </citation>
    <scope>FUNCTION</scope>
    <scope>TISSUE SPECIFICITY</scope>
    <scope>INDUCTION BY JASMONATE</scope>
</reference>
<proteinExistence type="evidence at transcript level"/>
<feature type="chain" id="PRO_0000444434" description="Cytochrome P450 705A1">
    <location>
        <begin position="1"/>
        <end position="513"/>
    </location>
</feature>
<feature type="transmembrane region" description="Helical" evidence="2">
    <location>
        <begin position="9"/>
        <end position="29"/>
    </location>
</feature>
<feature type="binding site" description="axial binding residue" evidence="1">
    <location>
        <position position="448"/>
    </location>
    <ligand>
        <name>heme</name>
        <dbReference type="ChEBI" id="CHEBI:30413"/>
    </ligand>
    <ligandPart>
        <name>Fe</name>
        <dbReference type="ChEBI" id="CHEBI:18248"/>
    </ligandPart>
</feature>
<feature type="sequence conflict" description="In Ref. 1; CAB10312/CAB78575." evidence="6" ref="1">
    <original>F</original>
    <variation>Y</variation>
    <location>
        <position position="117"/>
    </location>
</feature>
<gene>
    <name evidence="5" type="primary">CYP705A1</name>
    <name evidence="7" type="ordered locus">At4g15330</name>
    <name evidence="8" type="ORF">dl3710c</name>
    <name evidence="9" type="ORF">FCAALL.270</name>
</gene>
<evidence type="ECO:0000250" key="1">
    <source>
        <dbReference type="UniProtKB" id="P04798"/>
    </source>
</evidence>
<evidence type="ECO:0000255" key="2"/>
<evidence type="ECO:0000269" key="3">
    <source>
    </source>
</evidence>
<evidence type="ECO:0000269" key="4">
    <source>
    </source>
</evidence>
<evidence type="ECO:0000303" key="5">
    <source>
    </source>
</evidence>
<evidence type="ECO:0000305" key="6"/>
<evidence type="ECO:0000312" key="7">
    <source>
        <dbReference type="Araport" id="AT4G15330"/>
    </source>
</evidence>
<evidence type="ECO:0000312" key="8">
    <source>
        <dbReference type="EMBL" id="CAB10312.1"/>
    </source>
</evidence>
<evidence type="ECO:0000312" key="9">
    <source>
        <dbReference type="EMBL" id="CAB78575.1"/>
    </source>
</evidence>
<sequence length="513" mass="58495">MDAIVVDSQNCFIIILLCSFSLISYFVFFKKPKVNFDLLPSPPSLPIIGHLHLLLSTLIHKSLQKLSSKYGPLLHLRIFNIPFILVSSDSLAYEIFRDHDVNVSSRGVGAIDESLAFGSSGFIQAPYGDYWKFMKKLIATKLLGPQPLVRSQDFRSEELERFYKRLFDKAMKKESVMIHKEASRFVNNSLYKMCTGRSFSVENNEVERIMELTADLGALSQKFFVSKMFRKLLEKLGISLFKTEIMVVSRRFSELVERILIEYEEKMDGHQGTQFMDALLAAYRDENTEYKITRSHIKSLLTEFFIGAADASSIAIQWAMADIINNREILEKLREEIDSVVGKTRLVQETDLPNLPYLQAVVKEGLRLHPPTPLVVREFQEGCEIGGFFVPKNTTLIVNSYAMMRDPDSWQDPDEFKPERFLASLSREEDKKEKILNFLPFGSGRRMCPGSNLGYIFVGTAIGMMVQCFDWEINGDKINMEEATGGFLITMAHPLTCTPIPLPRTQNSLISHL</sequence>